<organism>
    <name type="scientific">Salmonella schwarzengrund (strain CVM19633)</name>
    <dbReference type="NCBI Taxonomy" id="439843"/>
    <lineage>
        <taxon>Bacteria</taxon>
        <taxon>Pseudomonadati</taxon>
        <taxon>Pseudomonadota</taxon>
        <taxon>Gammaproteobacteria</taxon>
        <taxon>Enterobacterales</taxon>
        <taxon>Enterobacteriaceae</taxon>
        <taxon>Salmonella</taxon>
    </lineage>
</organism>
<feature type="chain" id="PRO_1000114294" description="Probable septum site-determining protein MinC">
    <location>
        <begin position="1"/>
        <end position="235"/>
    </location>
</feature>
<feature type="region of interest" description="Disordered" evidence="2">
    <location>
        <begin position="104"/>
        <end position="125"/>
    </location>
</feature>
<feature type="compositionally biased region" description="Pro residues" evidence="2">
    <location>
        <begin position="110"/>
        <end position="119"/>
    </location>
</feature>
<reference key="1">
    <citation type="journal article" date="2011" name="J. Bacteriol.">
        <title>Comparative genomics of 28 Salmonella enterica isolates: evidence for CRISPR-mediated adaptive sublineage evolution.</title>
        <authorList>
            <person name="Fricke W.F."/>
            <person name="Mammel M.K."/>
            <person name="McDermott P.F."/>
            <person name="Tartera C."/>
            <person name="White D.G."/>
            <person name="Leclerc J.E."/>
            <person name="Ravel J."/>
            <person name="Cebula T.A."/>
        </authorList>
    </citation>
    <scope>NUCLEOTIDE SEQUENCE [LARGE SCALE GENOMIC DNA]</scope>
    <source>
        <strain>CVM19633</strain>
    </source>
</reference>
<evidence type="ECO:0000255" key="1">
    <source>
        <dbReference type="HAMAP-Rule" id="MF_00267"/>
    </source>
</evidence>
<evidence type="ECO:0000256" key="2">
    <source>
        <dbReference type="SAM" id="MobiDB-lite"/>
    </source>
</evidence>
<protein>
    <recommendedName>
        <fullName evidence="1">Probable septum site-determining protein MinC</fullName>
    </recommendedName>
</protein>
<proteinExistence type="inferred from homology"/>
<gene>
    <name evidence="1" type="primary">minC</name>
    <name type="ordered locus">SeSA_A1956</name>
</gene>
<dbReference type="EMBL" id="CP001127">
    <property type="protein sequence ID" value="ACF92127.1"/>
    <property type="molecule type" value="Genomic_DNA"/>
</dbReference>
<dbReference type="RefSeq" id="WP_000072527.1">
    <property type="nucleotide sequence ID" value="NC_011094.1"/>
</dbReference>
<dbReference type="SMR" id="B4TXY4"/>
<dbReference type="KEGG" id="sew:SeSA_A1956"/>
<dbReference type="HOGENOM" id="CLU_067812_0_1_6"/>
<dbReference type="Proteomes" id="UP000001865">
    <property type="component" value="Chromosome"/>
</dbReference>
<dbReference type="GO" id="GO:0000902">
    <property type="term" value="P:cell morphogenesis"/>
    <property type="evidence" value="ECO:0007669"/>
    <property type="project" value="InterPro"/>
</dbReference>
<dbReference type="GO" id="GO:0000917">
    <property type="term" value="P:division septum assembly"/>
    <property type="evidence" value="ECO:0007669"/>
    <property type="project" value="UniProtKB-KW"/>
</dbReference>
<dbReference type="GO" id="GO:0051302">
    <property type="term" value="P:regulation of cell division"/>
    <property type="evidence" value="ECO:0007669"/>
    <property type="project" value="InterPro"/>
</dbReference>
<dbReference type="GO" id="GO:1901891">
    <property type="term" value="P:regulation of cell septum assembly"/>
    <property type="evidence" value="ECO:0007669"/>
    <property type="project" value="InterPro"/>
</dbReference>
<dbReference type="FunFam" id="2.160.20.70:FF:000002">
    <property type="entry name" value="Probable septum site-determining protein MinC"/>
    <property type="match status" value="1"/>
</dbReference>
<dbReference type="Gene3D" id="2.160.20.70">
    <property type="match status" value="1"/>
</dbReference>
<dbReference type="Gene3D" id="3.30.70.260">
    <property type="match status" value="1"/>
</dbReference>
<dbReference type="HAMAP" id="MF_00267">
    <property type="entry name" value="MinC"/>
    <property type="match status" value="1"/>
</dbReference>
<dbReference type="InterPro" id="IPR016098">
    <property type="entry name" value="CAP/MinC_C"/>
</dbReference>
<dbReference type="InterPro" id="IPR013033">
    <property type="entry name" value="MinC"/>
</dbReference>
<dbReference type="InterPro" id="IPR036145">
    <property type="entry name" value="MinC_C_sf"/>
</dbReference>
<dbReference type="InterPro" id="IPR007874">
    <property type="entry name" value="MinC_N"/>
</dbReference>
<dbReference type="InterPro" id="IPR005526">
    <property type="entry name" value="Septum_form_inhib_MinC_C"/>
</dbReference>
<dbReference type="NCBIfam" id="TIGR01222">
    <property type="entry name" value="minC"/>
    <property type="match status" value="1"/>
</dbReference>
<dbReference type="PANTHER" id="PTHR34108">
    <property type="entry name" value="SEPTUM SITE-DETERMINING PROTEIN MINC"/>
    <property type="match status" value="1"/>
</dbReference>
<dbReference type="PANTHER" id="PTHR34108:SF1">
    <property type="entry name" value="SEPTUM SITE-DETERMINING PROTEIN MINC"/>
    <property type="match status" value="1"/>
</dbReference>
<dbReference type="Pfam" id="PF03775">
    <property type="entry name" value="MinC_C"/>
    <property type="match status" value="1"/>
</dbReference>
<dbReference type="Pfam" id="PF05209">
    <property type="entry name" value="MinC_N"/>
    <property type="match status" value="1"/>
</dbReference>
<dbReference type="SUPFAM" id="SSF63848">
    <property type="entry name" value="Cell-division inhibitor MinC, C-terminal domain"/>
    <property type="match status" value="1"/>
</dbReference>
<name>MINC_SALSV</name>
<sequence length="235" mass="25246">MSNTPIELKGSSFTLSVVHLHEAEPEVIRQALEDKIAQAPAFLKHAPVVINVSGLESPVNWPELHKIVTSTGLRIIGVSGCKDASLKVEIDRMGLPLLTEGKEKAVRPAPVEPATPSEPPQNANPITKTRLIDVPVRSGQRIYAPQCDLIVTSHVSAGAELIADGNIHVYGMMRGRALAGASGDREAQIFCTHLTAELVSIAGVYWLSDKIPAEFYGKAARLRLADNALTVQPLN</sequence>
<keyword id="KW-0131">Cell cycle</keyword>
<keyword id="KW-0132">Cell division</keyword>
<keyword id="KW-0717">Septation</keyword>
<accession>B4TXY4</accession>
<comment type="function">
    <text evidence="1">Cell division inhibitor that blocks the formation of polar Z ring septums. Rapidly oscillates between the poles of the cell to destabilize FtsZ filaments that have formed before they mature into polar Z rings. Prevents FtsZ polymerization.</text>
</comment>
<comment type="subunit">
    <text evidence="1">Interacts with MinD and FtsZ.</text>
</comment>
<comment type="similarity">
    <text evidence="1">Belongs to the MinC family.</text>
</comment>